<comment type="similarity">
    <text evidence="1">Belongs to the UPF0102 family.</text>
</comment>
<reference key="1">
    <citation type="submission" date="2008-06" db="EMBL/GenBank/DDBJ databases">
        <title>Complete sequence of Chlorobium phaeobacteroides BS1.</title>
        <authorList>
            <consortium name="US DOE Joint Genome Institute"/>
            <person name="Lucas S."/>
            <person name="Copeland A."/>
            <person name="Lapidus A."/>
            <person name="Glavina del Rio T."/>
            <person name="Dalin E."/>
            <person name="Tice H."/>
            <person name="Bruce D."/>
            <person name="Goodwin L."/>
            <person name="Pitluck S."/>
            <person name="Schmutz J."/>
            <person name="Larimer F."/>
            <person name="Land M."/>
            <person name="Hauser L."/>
            <person name="Kyrpides N."/>
            <person name="Ovchinnikova G."/>
            <person name="Li T."/>
            <person name="Liu Z."/>
            <person name="Zhao F."/>
            <person name="Overmann J."/>
            <person name="Bryant D.A."/>
            <person name="Richardson P."/>
        </authorList>
    </citation>
    <scope>NUCLEOTIDE SEQUENCE [LARGE SCALE GENOMIC DNA]</scope>
    <source>
        <strain>BS1</strain>
    </source>
</reference>
<accession>B3EJJ5</accession>
<feature type="chain" id="PRO_1000091229" description="UPF0102 protein Cphamn1_0017">
    <location>
        <begin position="1"/>
        <end position="126"/>
    </location>
</feature>
<organism>
    <name type="scientific">Chlorobium phaeobacteroides (strain BS1)</name>
    <dbReference type="NCBI Taxonomy" id="331678"/>
    <lineage>
        <taxon>Bacteria</taxon>
        <taxon>Pseudomonadati</taxon>
        <taxon>Chlorobiota</taxon>
        <taxon>Chlorobiia</taxon>
        <taxon>Chlorobiales</taxon>
        <taxon>Chlorobiaceae</taxon>
        <taxon>Chlorobium/Pelodictyon group</taxon>
        <taxon>Chlorobium</taxon>
    </lineage>
</organism>
<proteinExistence type="inferred from homology"/>
<name>Y017_CHLPB</name>
<evidence type="ECO:0000255" key="1">
    <source>
        <dbReference type="HAMAP-Rule" id="MF_00048"/>
    </source>
</evidence>
<gene>
    <name type="ordered locus">Cphamn1_0017</name>
</gene>
<dbReference type="EMBL" id="CP001101">
    <property type="protein sequence ID" value="ACE03006.1"/>
    <property type="molecule type" value="Genomic_DNA"/>
</dbReference>
<dbReference type="SMR" id="B3EJJ5"/>
<dbReference type="STRING" id="331678.Cphamn1_0017"/>
<dbReference type="KEGG" id="cpb:Cphamn1_0017"/>
<dbReference type="eggNOG" id="COG0792">
    <property type="taxonomic scope" value="Bacteria"/>
</dbReference>
<dbReference type="HOGENOM" id="CLU_115353_2_1_10"/>
<dbReference type="OrthoDB" id="9802516at2"/>
<dbReference type="GO" id="GO:0003676">
    <property type="term" value="F:nucleic acid binding"/>
    <property type="evidence" value="ECO:0007669"/>
    <property type="project" value="InterPro"/>
</dbReference>
<dbReference type="CDD" id="cd20736">
    <property type="entry name" value="PoNe_Nuclease"/>
    <property type="match status" value="1"/>
</dbReference>
<dbReference type="Gene3D" id="3.40.1350.10">
    <property type="match status" value="1"/>
</dbReference>
<dbReference type="HAMAP" id="MF_00048">
    <property type="entry name" value="UPF0102"/>
    <property type="match status" value="1"/>
</dbReference>
<dbReference type="InterPro" id="IPR011335">
    <property type="entry name" value="Restrct_endonuc-II-like"/>
</dbReference>
<dbReference type="InterPro" id="IPR011856">
    <property type="entry name" value="tRNA_endonuc-like_dom_sf"/>
</dbReference>
<dbReference type="InterPro" id="IPR003509">
    <property type="entry name" value="UPF0102_YraN-like"/>
</dbReference>
<dbReference type="NCBIfam" id="NF009150">
    <property type="entry name" value="PRK12497.1-3"/>
    <property type="match status" value="1"/>
</dbReference>
<dbReference type="NCBIfam" id="NF009154">
    <property type="entry name" value="PRK12497.3-3"/>
    <property type="match status" value="1"/>
</dbReference>
<dbReference type="NCBIfam" id="TIGR00252">
    <property type="entry name" value="YraN family protein"/>
    <property type="match status" value="1"/>
</dbReference>
<dbReference type="PANTHER" id="PTHR34039">
    <property type="entry name" value="UPF0102 PROTEIN YRAN"/>
    <property type="match status" value="1"/>
</dbReference>
<dbReference type="PANTHER" id="PTHR34039:SF1">
    <property type="entry name" value="UPF0102 PROTEIN YRAN"/>
    <property type="match status" value="1"/>
</dbReference>
<dbReference type="Pfam" id="PF02021">
    <property type="entry name" value="UPF0102"/>
    <property type="match status" value="1"/>
</dbReference>
<dbReference type="SUPFAM" id="SSF52980">
    <property type="entry name" value="Restriction endonuclease-like"/>
    <property type="match status" value="1"/>
</dbReference>
<protein>
    <recommendedName>
        <fullName evidence="1">UPF0102 protein Cphamn1_0017</fullName>
    </recommendedName>
</protein>
<sequence>MSFIPHDLGRQGEHTAVTFLIEKGYRILQRNYRHRRNEIDIIALDRRTLCFIEVKTRSSASKGHPLEAVTPEKQKEIIRAATAYLSAYPSPEPDCRFDVIAIIAHDFTNGRIREFKLEHITNAFMT</sequence>